<protein>
    <recommendedName>
        <fullName evidence="1">tRNA modification GTPase MnmE</fullName>
        <ecNumber evidence="1">3.6.-.-</ecNumber>
    </recommendedName>
</protein>
<comment type="function">
    <text evidence="1">Exhibits a very high intrinsic GTPase hydrolysis rate. Involved in the addition of a carboxymethylaminomethyl (cmnm) group at the wobble position (U34) of certain tRNAs, forming tRNA-cmnm(5)s(2)U34.</text>
</comment>
<comment type="cofactor">
    <cofactor evidence="1">
        <name>K(+)</name>
        <dbReference type="ChEBI" id="CHEBI:29103"/>
    </cofactor>
    <text evidence="1">Binds 1 potassium ion per subunit.</text>
</comment>
<comment type="subunit">
    <text evidence="1">Homodimer. Heterotetramer of two MnmE and two MnmG subunits.</text>
</comment>
<comment type="subcellular location">
    <subcellularLocation>
        <location evidence="1">Cytoplasm</location>
    </subcellularLocation>
</comment>
<comment type="similarity">
    <text evidence="1">Belongs to the TRAFAC class TrmE-Era-EngA-EngB-Septin-like GTPase superfamily. TrmE GTPase family.</text>
</comment>
<feature type="chain" id="PRO_1000197061" description="tRNA modification GTPase MnmE">
    <location>
        <begin position="1"/>
        <end position="454"/>
    </location>
</feature>
<feature type="domain" description="TrmE-type G">
    <location>
        <begin position="216"/>
        <end position="377"/>
    </location>
</feature>
<feature type="binding site" evidence="1">
    <location>
        <position position="23"/>
    </location>
    <ligand>
        <name>(6S)-5-formyl-5,6,7,8-tetrahydrofolate</name>
        <dbReference type="ChEBI" id="CHEBI:57457"/>
    </ligand>
</feature>
<feature type="binding site" evidence="1">
    <location>
        <position position="80"/>
    </location>
    <ligand>
        <name>(6S)-5-formyl-5,6,7,8-tetrahydrofolate</name>
        <dbReference type="ChEBI" id="CHEBI:57457"/>
    </ligand>
</feature>
<feature type="binding site" evidence="1">
    <location>
        <position position="120"/>
    </location>
    <ligand>
        <name>(6S)-5-formyl-5,6,7,8-tetrahydrofolate</name>
        <dbReference type="ChEBI" id="CHEBI:57457"/>
    </ligand>
</feature>
<feature type="binding site" evidence="1">
    <location>
        <begin position="226"/>
        <end position="231"/>
    </location>
    <ligand>
        <name>GTP</name>
        <dbReference type="ChEBI" id="CHEBI:37565"/>
    </ligand>
</feature>
<feature type="binding site" evidence="1">
    <location>
        <position position="226"/>
    </location>
    <ligand>
        <name>K(+)</name>
        <dbReference type="ChEBI" id="CHEBI:29103"/>
    </ligand>
</feature>
<feature type="binding site" evidence="1">
    <location>
        <position position="230"/>
    </location>
    <ligand>
        <name>Mg(2+)</name>
        <dbReference type="ChEBI" id="CHEBI:18420"/>
    </ligand>
</feature>
<feature type="binding site" evidence="1">
    <location>
        <begin position="245"/>
        <end position="251"/>
    </location>
    <ligand>
        <name>GTP</name>
        <dbReference type="ChEBI" id="CHEBI:37565"/>
    </ligand>
</feature>
<feature type="binding site" evidence="1">
    <location>
        <position position="245"/>
    </location>
    <ligand>
        <name>K(+)</name>
        <dbReference type="ChEBI" id="CHEBI:29103"/>
    </ligand>
</feature>
<feature type="binding site" evidence="1">
    <location>
        <position position="247"/>
    </location>
    <ligand>
        <name>K(+)</name>
        <dbReference type="ChEBI" id="CHEBI:29103"/>
    </ligand>
</feature>
<feature type="binding site" evidence="1">
    <location>
        <position position="250"/>
    </location>
    <ligand>
        <name>K(+)</name>
        <dbReference type="ChEBI" id="CHEBI:29103"/>
    </ligand>
</feature>
<feature type="binding site" evidence="1">
    <location>
        <position position="251"/>
    </location>
    <ligand>
        <name>Mg(2+)</name>
        <dbReference type="ChEBI" id="CHEBI:18420"/>
    </ligand>
</feature>
<feature type="binding site" evidence="1">
    <location>
        <begin position="270"/>
        <end position="273"/>
    </location>
    <ligand>
        <name>GTP</name>
        <dbReference type="ChEBI" id="CHEBI:37565"/>
    </ligand>
</feature>
<feature type="binding site" evidence="1">
    <location>
        <begin position="335"/>
        <end position="338"/>
    </location>
    <ligand>
        <name>GTP</name>
        <dbReference type="ChEBI" id="CHEBI:37565"/>
    </ligand>
</feature>
<feature type="binding site" evidence="1">
    <location>
        <begin position="358"/>
        <end position="360"/>
    </location>
    <ligand>
        <name>GTP</name>
        <dbReference type="ChEBI" id="CHEBI:37565"/>
    </ligand>
</feature>
<feature type="binding site" evidence="1">
    <location>
        <position position="454"/>
    </location>
    <ligand>
        <name>(6S)-5-formyl-5,6,7,8-tetrahydrofolate</name>
        <dbReference type="ChEBI" id="CHEBI:57457"/>
    </ligand>
</feature>
<accession>B4SYB2</accession>
<name>MNME_SALNS</name>
<evidence type="ECO:0000255" key="1">
    <source>
        <dbReference type="HAMAP-Rule" id="MF_00379"/>
    </source>
</evidence>
<proteinExistence type="inferred from homology"/>
<keyword id="KW-0963">Cytoplasm</keyword>
<keyword id="KW-0342">GTP-binding</keyword>
<keyword id="KW-0378">Hydrolase</keyword>
<keyword id="KW-0460">Magnesium</keyword>
<keyword id="KW-0479">Metal-binding</keyword>
<keyword id="KW-0547">Nucleotide-binding</keyword>
<keyword id="KW-0630">Potassium</keyword>
<keyword id="KW-0819">tRNA processing</keyword>
<reference key="1">
    <citation type="journal article" date="2011" name="J. Bacteriol.">
        <title>Comparative genomics of 28 Salmonella enterica isolates: evidence for CRISPR-mediated adaptive sublineage evolution.</title>
        <authorList>
            <person name="Fricke W.F."/>
            <person name="Mammel M.K."/>
            <person name="McDermott P.F."/>
            <person name="Tartera C."/>
            <person name="White D.G."/>
            <person name="Leclerc J.E."/>
            <person name="Ravel J."/>
            <person name="Cebula T.A."/>
        </authorList>
    </citation>
    <scope>NUCLEOTIDE SEQUENCE [LARGE SCALE GENOMIC DNA]</scope>
    <source>
        <strain>SL254</strain>
    </source>
</reference>
<organism>
    <name type="scientific">Salmonella newport (strain SL254)</name>
    <dbReference type="NCBI Taxonomy" id="423368"/>
    <lineage>
        <taxon>Bacteria</taxon>
        <taxon>Pseudomonadati</taxon>
        <taxon>Pseudomonadota</taxon>
        <taxon>Gammaproteobacteria</taxon>
        <taxon>Enterobacterales</taxon>
        <taxon>Enterobacteriaceae</taxon>
        <taxon>Salmonella</taxon>
    </lineage>
</organism>
<gene>
    <name evidence="1" type="primary">mnmE</name>
    <name evidence="1" type="synonym">trmE</name>
    <name type="ordered locus">SNSL254_A4127</name>
</gene>
<dbReference type="EC" id="3.6.-.-" evidence="1"/>
<dbReference type="EMBL" id="CP001113">
    <property type="protein sequence ID" value="ACF63857.1"/>
    <property type="molecule type" value="Genomic_DNA"/>
</dbReference>
<dbReference type="RefSeq" id="WP_000019081.1">
    <property type="nucleotide sequence ID" value="NZ_CCMR01000001.1"/>
</dbReference>
<dbReference type="SMR" id="B4SYB2"/>
<dbReference type="KEGG" id="see:SNSL254_A4127"/>
<dbReference type="HOGENOM" id="CLU_019624_4_1_6"/>
<dbReference type="Proteomes" id="UP000008824">
    <property type="component" value="Chromosome"/>
</dbReference>
<dbReference type="GO" id="GO:0005829">
    <property type="term" value="C:cytosol"/>
    <property type="evidence" value="ECO:0007669"/>
    <property type="project" value="TreeGrafter"/>
</dbReference>
<dbReference type="GO" id="GO:0005525">
    <property type="term" value="F:GTP binding"/>
    <property type="evidence" value="ECO:0007669"/>
    <property type="project" value="UniProtKB-UniRule"/>
</dbReference>
<dbReference type="GO" id="GO:0003924">
    <property type="term" value="F:GTPase activity"/>
    <property type="evidence" value="ECO:0007669"/>
    <property type="project" value="UniProtKB-UniRule"/>
</dbReference>
<dbReference type="GO" id="GO:0046872">
    <property type="term" value="F:metal ion binding"/>
    <property type="evidence" value="ECO:0007669"/>
    <property type="project" value="UniProtKB-KW"/>
</dbReference>
<dbReference type="GO" id="GO:0030488">
    <property type="term" value="P:tRNA methylation"/>
    <property type="evidence" value="ECO:0007669"/>
    <property type="project" value="TreeGrafter"/>
</dbReference>
<dbReference type="GO" id="GO:0002098">
    <property type="term" value="P:tRNA wobble uridine modification"/>
    <property type="evidence" value="ECO:0007669"/>
    <property type="project" value="TreeGrafter"/>
</dbReference>
<dbReference type="CDD" id="cd04164">
    <property type="entry name" value="trmE"/>
    <property type="match status" value="1"/>
</dbReference>
<dbReference type="CDD" id="cd14858">
    <property type="entry name" value="TrmE_N"/>
    <property type="match status" value="1"/>
</dbReference>
<dbReference type="FunFam" id="3.30.1360.120:FF:000001">
    <property type="entry name" value="tRNA modification GTPase MnmE"/>
    <property type="match status" value="1"/>
</dbReference>
<dbReference type="FunFam" id="3.40.50.300:FF:000249">
    <property type="entry name" value="tRNA modification GTPase MnmE"/>
    <property type="match status" value="1"/>
</dbReference>
<dbReference type="Gene3D" id="3.40.50.300">
    <property type="entry name" value="P-loop containing nucleotide triphosphate hydrolases"/>
    <property type="match status" value="1"/>
</dbReference>
<dbReference type="Gene3D" id="3.30.1360.120">
    <property type="entry name" value="Probable tRNA modification gtpase trme, domain 1"/>
    <property type="match status" value="1"/>
</dbReference>
<dbReference type="Gene3D" id="1.20.120.430">
    <property type="entry name" value="tRNA modification GTPase MnmE domain 2"/>
    <property type="match status" value="1"/>
</dbReference>
<dbReference type="HAMAP" id="MF_00379">
    <property type="entry name" value="GTPase_MnmE"/>
    <property type="match status" value="1"/>
</dbReference>
<dbReference type="InterPro" id="IPR031168">
    <property type="entry name" value="G_TrmE"/>
</dbReference>
<dbReference type="InterPro" id="IPR006073">
    <property type="entry name" value="GTP-bd"/>
</dbReference>
<dbReference type="InterPro" id="IPR018948">
    <property type="entry name" value="GTP-bd_TrmE_N"/>
</dbReference>
<dbReference type="InterPro" id="IPR004520">
    <property type="entry name" value="GTPase_MnmE"/>
</dbReference>
<dbReference type="InterPro" id="IPR027368">
    <property type="entry name" value="MnmE_dom2"/>
</dbReference>
<dbReference type="InterPro" id="IPR025867">
    <property type="entry name" value="MnmE_helical"/>
</dbReference>
<dbReference type="InterPro" id="IPR027417">
    <property type="entry name" value="P-loop_NTPase"/>
</dbReference>
<dbReference type="InterPro" id="IPR005225">
    <property type="entry name" value="Small_GTP-bd"/>
</dbReference>
<dbReference type="InterPro" id="IPR027266">
    <property type="entry name" value="TrmE/GcvT_dom1"/>
</dbReference>
<dbReference type="NCBIfam" id="TIGR00450">
    <property type="entry name" value="mnmE_trmE_thdF"/>
    <property type="match status" value="1"/>
</dbReference>
<dbReference type="NCBIfam" id="NF003661">
    <property type="entry name" value="PRK05291.1-3"/>
    <property type="match status" value="1"/>
</dbReference>
<dbReference type="NCBIfam" id="TIGR00231">
    <property type="entry name" value="small_GTP"/>
    <property type="match status" value="1"/>
</dbReference>
<dbReference type="PANTHER" id="PTHR42714">
    <property type="entry name" value="TRNA MODIFICATION GTPASE GTPBP3"/>
    <property type="match status" value="1"/>
</dbReference>
<dbReference type="PANTHER" id="PTHR42714:SF2">
    <property type="entry name" value="TRNA MODIFICATION GTPASE GTPBP3, MITOCHONDRIAL"/>
    <property type="match status" value="1"/>
</dbReference>
<dbReference type="Pfam" id="PF01926">
    <property type="entry name" value="MMR_HSR1"/>
    <property type="match status" value="1"/>
</dbReference>
<dbReference type="Pfam" id="PF12631">
    <property type="entry name" value="MnmE_helical"/>
    <property type="match status" value="1"/>
</dbReference>
<dbReference type="Pfam" id="PF10396">
    <property type="entry name" value="TrmE_N"/>
    <property type="match status" value="1"/>
</dbReference>
<dbReference type="SUPFAM" id="SSF52540">
    <property type="entry name" value="P-loop containing nucleoside triphosphate hydrolases"/>
    <property type="match status" value="1"/>
</dbReference>
<dbReference type="SUPFAM" id="SSF116878">
    <property type="entry name" value="TrmE connector domain"/>
    <property type="match status" value="1"/>
</dbReference>
<dbReference type="PROSITE" id="PS51709">
    <property type="entry name" value="G_TRME"/>
    <property type="match status" value="1"/>
</dbReference>
<sequence length="454" mass="49092">MSHNDTIVAQATPPGRGGVGILRISGLKARDVAQEVLGKLPKPRYADYLPFKDVDGSALDQGIALWFPGPNSFTGEDVLELQGHGGPVILDLLLKRILTLPGVRIARPGEFSERAFLNDKLDLAQAEAIADLIDASSEQAARSALNSLQGAFSARVNHLVEALTHLRIYVEAAIDFPDEEIDFLSDGKIEAQLNGVIADLDAVRTEARQGSLLREGMKVVIAGRPNAGKSSLLNALAGREAAIVTDIAGTTRDVLREHIHIDGMPLHIIDTAGLRDASDEVERIGIERAWQEIEQADRVLFMVDGTTTDAVDPADIWPDFIARLPKNLPITVVRNKADITGETLGISEVNGHSLVRLSARTGEGVDVLRNHLKQSMGFDTNMEGGFLARRRHLQALAEAAEHLEQGKAQLLGAWAGELLAEELRLAQQSLSEITGEFTSDDLLGRIFSSFCIGK</sequence>